<protein>
    <recommendedName>
        <fullName evidence="3">Glyceraldehyde-3-phosphate dehydrogenase 2</fullName>
        <shortName evidence="3">GAPDH 2</shortName>
        <ecNumber evidence="2">1.2.1.59</ecNumber>
    </recommendedName>
    <alternativeName>
        <fullName evidence="3">NAD(P)-dependent glyceraldehyde-3-phosphate dehydrogenase</fullName>
    </alternativeName>
</protein>
<dbReference type="EC" id="1.2.1.59" evidence="2"/>
<dbReference type="EMBL" id="L07498">
    <property type="protein sequence ID" value="AAA21996.1"/>
    <property type="molecule type" value="Genomic_DNA"/>
</dbReference>
<dbReference type="EMBL" id="CP000117">
    <property type="protein sequence ID" value="ABA21936.1"/>
    <property type="molecule type" value="Genomic_DNA"/>
</dbReference>
<dbReference type="PIR" id="I39603">
    <property type="entry name" value="I39603"/>
</dbReference>
<dbReference type="SMR" id="P34917"/>
<dbReference type="STRING" id="240292.Ava_2318"/>
<dbReference type="KEGG" id="ava:Ava_2318"/>
<dbReference type="eggNOG" id="COG0057">
    <property type="taxonomic scope" value="Bacteria"/>
</dbReference>
<dbReference type="HOGENOM" id="CLU_030140_0_2_3"/>
<dbReference type="UniPathway" id="UPA00116"/>
<dbReference type="Proteomes" id="UP000002533">
    <property type="component" value="Chromosome"/>
</dbReference>
<dbReference type="GO" id="GO:0005737">
    <property type="term" value="C:cytoplasm"/>
    <property type="evidence" value="ECO:0007669"/>
    <property type="project" value="UniProtKB-SubCell"/>
</dbReference>
<dbReference type="GO" id="GO:0004365">
    <property type="term" value="F:glyceraldehyde-3-phosphate dehydrogenase (NAD+) (phosphorylating) activity"/>
    <property type="evidence" value="ECO:0000250"/>
    <property type="project" value="UniProtKB"/>
</dbReference>
<dbReference type="GO" id="GO:0047100">
    <property type="term" value="F:glyceraldehyde-3-phosphate dehydrogenase (NADP+) (phosphorylating) activity"/>
    <property type="evidence" value="ECO:0007669"/>
    <property type="project" value="RHEA"/>
</dbReference>
<dbReference type="GO" id="GO:0051287">
    <property type="term" value="F:NAD binding"/>
    <property type="evidence" value="ECO:0000250"/>
    <property type="project" value="UniProtKB"/>
</dbReference>
<dbReference type="GO" id="GO:0050661">
    <property type="term" value="F:NADP binding"/>
    <property type="evidence" value="ECO:0007669"/>
    <property type="project" value="InterPro"/>
</dbReference>
<dbReference type="GO" id="GO:0006006">
    <property type="term" value="P:glucose metabolic process"/>
    <property type="evidence" value="ECO:0007669"/>
    <property type="project" value="InterPro"/>
</dbReference>
<dbReference type="GO" id="GO:0019253">
    <property type="term" value="P:reductive pentose-phosphate cycle"/>
    <property type="evidence" value="ECO:0007669"/>
    <property type="project" value="UniProtKB-UniPathway"/>
</dbReference>
<dbReference type="CDD" id="cd18126">
    <property type="entry name" value="GAPDH_I_C"/>
    <property type="match status" value="1"/>
</dbReference>
<dbReference type="CDD" id="cd05214">
    <property type="entry name" value="GAPDH_I_N"/>
    <property type="match status" value="1"/>
</dbReference>
<dbReference type="FunFam" id="3.30.360.10:FF:000002">
    <property type="entry name" value="Glyceraldehyde-3-phosphate dehydrogenase"/>
    <property type="match status" value="1"/>
</dbReference>
<dbReference type="FunFam" id="3.40.50.720:FF:000001">
    <property type="entry name" value="Glyceraldehyde-3-phosphate dehydrogenase"/>
    <property type="match status" value="1"/>
</dbReference>
<dbReference type="Gene3D" id="3.30.360.10">
    <property type="entry name" value="Dihydrodipicolinate Reductase, domain 2"/>
    <property type="match status" value="1"/>
</dbReference>
<dbReference type="Gene3D" id="3.40.50.720">
    <property type="entry name" value="NAD(P)-binding Rossmann-like Domain"/>
    <property type="match status" value="1"/>
</dbReference>
<dbReference type="InterPro" id="IPR020831">
    <property type="entry name" value="GlycerAld/Erythrose_P_DH"/>
</dbReference>
<dbReference type="InterPro" id="IPR020830">
    <property type="entry name" value="GlycerAld_3-P_DH_AS"/>
</dbReference>
<dbReference type="InterPro" id="IPR020829">
    <property type="entry name" value="GlycerAld_3-P_DH_cat"/>
</dbReference>
<dbReference type="InterPro" id="IPR020828">
    <property type="entry name" value="GlycerAld_3-P_DH_NAD(P)-bd"/>
</dbReference>
<dbReference type="InterPro" id="IPR006424">
    <property type="entry name" value="Glyceraldehyde-3-P_DH_1"/>
</dbReference>
<dbReference type="InterPro" id="IPR036291">
    <property type="entry name" value="NAD(P)-bd_dom_sf"/>
</dbReference>
<dbReference type="NCBIfam" id="TIGR01534">
    <property type="entry name" value="GAPDH-I"/>
    <property type="match status" value="1"/>
</dbReference>
<dbReference type="NCBIfam" id="NF005641">
    <property type="entry name" value="PRK07403.1"/>
    <property type="match status" value="1"/>
</dbReference>
<dbReference type="PANTHER" id="PTHR43148">
    <property type="entry name" value="GLYCERALDEHYDE-3-PHOSPHATE DEHYDROGENASE 2"/>
    <property type="match status" value="1"/>
</dbReference>
<dbReference type="Pfam" id="PF02800">
    <property type="entry name" value="Gp_dh_C"/>
    <property type="match status" value="1"/>
</dbReference>
<dbReference type="Pfam" id="PF00044">
    <property type="entry name" value="Gp_dh_N"/>
    <property type="match status" value="1"/>
</dbReference>
<dbReference type="PIRSF" id="PIRSF000149">
    <property type="entry name" value="GAP_DH"/>
    <property type="match status" value="1"/>
</dbReference>
<dbReference type="PRINTS" id="PR00078">
    <property type="entry name" value="G3PDHDRGNASE"/>
</dbReference>
<dbReference type="SMART" id="SM00846">
    <property type="entry name" value="Gp_dh_N"/>
    <property type="match status" value="1"/>
</dbReference>
<dbReference type="SUPFAM" id="SSF55347">
    <property type="entry name" value="Glyceraldehyde-3-phosphate dehydrogenase-like, C-terminal domain"/>
    <property type="match status" value="1"/>
</dbReference>
<dbReference type="SUPFAM" id="SSF51735">
    <property type="entry name" value="NAD(P)-binding Rossmann-fold domains"/>
    <property type="match status" value="1"/>
</dbReference>
<dbReference type="PROSITE" id="PS00071">
    <property type="entry name" value="GAPDH"/>
    <property type="match status" value="1"/>
</dbReference>
<reference key="1">
    <citation type="journal article" date="1993" name="Proc. Natl. Acad. Sci. U.S.A.">
        <title>Evidence for a chimeric nature of nuclear genomes: eubacterial origin of eukaryotic glyceraldehyde-3-phosphate dehydrogenase genes.</title>
        <authorList>
            <person name="Martin W."/>
            <person name="Brinkmann H."/>
            <person name="Savona C."/>
            <person name="Cerff R."/>
        </authorList>
    </citation>
    <scope>NUCLEOTIDE SEQUENCE [GENOMIC DNA]</scope>
</reference>
<reference key="2">
    <citation type="journal article" date="2014" name="Stand. Genomic Sci.">
        <title>Complete genome sequence of Anabaena variabilis ATCC 29413.</title>
        <authorList>
            <person name="Thiel T."/>
            <person name="Pratte B.S."/>
            <person name="Zhong J."/>
            <person name="Goodwin L."/>
            <person name="Copeland A."/>
            <person name="Lucas S."/>
            <person name="Han C."/>
            <person name="Pitluck S."/>
            <person name="Land M.L."/>
            <person name="Kyrpides N.C."/>
            <person name="Woyke T."/>
        </authorList>
    </citation>
    <scope>NUCLEOTIDE SEQUENCE [LARGE SCALE GENOMIC DNA]</scope>
    <source>
        <strain>ATCC 29413 / PCC 7937</strain>
    </source>
</reference>
<accession>P34917</accession>
<accession>Q3MAQ0</accession>
<evidence type="ECO:0000250" key="1">
    <source>
        <dbReference type="UniProtKB" id="P00362"/>
    </source>
</evidence>
<evidence type="ECO:0000250" key="2">
    <source>
        <dbReference type="UniProtKB" id="P10618"/>
    </source>
</evidence>
<evidence type="ECO:0000250" key="3">
    <source>
        <dbReference type="UniProtKB" id="P58554"/>
    </source>
</evidence>
<evidence type="ECO:0000250" key="4">
    <source>
        <dbReference type="UniProtKB" id="P80506"/>
    </source>
</evidence>
<evidence type="ECO:0000250" key="5">
    <source>
        <dbReference type="UniProtKB" id="Q6GIL8"/>
    </source>
</evidence>
<evidence type="ECO:0000305" key="6"/>
<proteinExistence type="inferred from homology"/>
<comment type="function">
    <text evidence="3">Gap2 has a major role in carbon fixation as a component of the Calvin cycle. Catalyzes the oxidative phosphorylation of glyceraldehyde 3-phosphate (G3P) to 1,3-bisphosphoglycerate (BPG) using the cofactor NAD. The first reaction step involves the formation of a hemiacetal intermediate between G3P and a cysteine residue, and this hemiacetal intermediate is then oxidized to a thioester, with concomitant reduction of NAD to NADH. The reduced NADH is then exchanged with the second NAD, and the thioester is attacked by a nucleophilic inorganic phosphate to produce BPG.</text>
</comment>
<comment type="catalytic activity">
    <reaction evidence="2">
        <text>D-glyceraldehyde 3-phosphate + phosphate + NADP(+) = (2R)-3-phospho-glyceroyl phosphate + NADPH + H(+)</text>
        <dbReference type="Rhea" id="RHEA:10296"/>
        <dbReference type="ChEBI" id="CHEBI:15378"/>
        <dbReference type="ChEBI" id="CHEBI:43474"/>
        <dbReference type="ChEBI" id="CHEBI:57604"/>
        <dbReference type="ChEBI" id="CHEBI:57783"/>
        <dbReference type="ChEBI" id="CHEBI:58349"/>
        <dbReference type="ChEBI" id="CHEBI:59776"/>
        <dbReference type="EC" id="1.2.1.59"/>
    </reaction>
</comment>
<comment type="catalytic activity">
    <reaction evidence="2">
        <text>D-glyceraldehyde 3-phosphate + phosphate + NAD(+) = (2R)-3-phospho-glyceroyl phosphate + NADH + H(+)</text>
        <dbReference type="Rhea" id="RHEA:10300"/>
        <dbReference type="ChEBI" id="CHEBI:15378"/>
        <dbReference type="ChEBI" id="CHEBI:43474"/>
        <dbReference type="ChEBI" id="CHEBI:57540"/>
        <dbReference type="ChEBI" id="CHEBI:57604"/>
        <dbReference type="ChEBI" id="CHEBI:57945"/>
        <dbReference type="ChEBI" id="CHEBI:59776"/>
        <dbReference type="EC" id="1.2.1.59"/>
    </reaction>
</comment>
<comment type="pathway">
    <text evidence="3">Carbohydrate biosynthesis; Calvin cycle.</text>
</comment>
<comment type="subunit">
    <text evidence="4">Homotetramer.</text>
</comment>
<comment type="subcellular location">
    <subcellularLocation>
        <location evidence="6">Cytoplasm</location>
    </subcellularLocation>
</comment>
<comment type="similarity">
    <text evidence="6">Belongs to the glyceraldehyde-3-phosphate dehydrogenase family.</text>
</comment>
<sequence length="337" mass="36876">MIRVAINGFGRIGRNFARCWLGRENSNIELVAVNDTSDPRTNAHLLKYDSMLGKLKNVDITADDNSITVNGKTIKCVSDRNPENLPWKEWEIDLIIESTGVFTSKEGALKHVNAGAKKVLITAPGKNEDGTFVIGVNHHDYDHNVHHIISNASCTTNCLAPIAKVLNDKFGIIKGSMTTTHSYTGDQRLLDASHRDLRRARAAAINIVPTSTGAAKAVALVIPELKGKLNGVALRVPTPNVSMVDFVVQVEKRTITEEVNQALKDASEGPLKGILDYSELQLVSSDYQGTDASSIVDASLTLVMGNDLVKVMAWYDNEWGYSQRVLDLAELVAEKWV</sequence>
<gene>
    <name type="primary">gap2</name>
    <name type="ordered locus">Ava_2318</name>
</gene>
<feature type="chain" id="PRO_0000145626" description="Glyceraldehyde-3-phosphate dehydrogenase 2">
    <location>
        <begin position="1"/>
        <end position="337"/>
    </location>
</feature>
<feature type="active site" description="Nucleophile" evidence="1">
    <location>
        <position position="154"/>
    </location>
</feature>
<feature type="binding site" evidence="1">
    <location>
        <begin position="11"/>
        <end position="12"/>
    </location>
    <ligand>
        <name>NADP(+)</name>
        <dbReference type="ChEBI" id="CHEBI:58349"/>
    </ligand>
</feature>
<feature type="binding site" evidence="1">
    <location>
        <position position="35"/>
    </location>
    <ligand>
        <name>NADP(+)</name>
        <dbReference type="ChEBI" id="CHEBI:58349"/>
    </ligand>
</feature>
<feature type="binding site" evidence="1">
    <location>
        <position position="80"/>
    </location>
    <ligand>
        <name>NADP(+)</name>
        <dbReference type="ChEBI" id="CHEBI:58349"/>
    </ligand>
</feature>
<feature type="binding site" evidence="1">
    <location>
        <position position="122"/>
    </location>
    <ligand>
        <name>NADP(+)</name>
        <dbReference type="ChEBI" id="CHEBI:58349"/>
    </ligand>
</feature>
<feature type="binding site" evidence="1">
    <location>
        <begin position="153"/>
        <end position="155"/>
    </location>
    <ligand>
        <name>D-glyceraldehyde 3-phosphate</name>
        <dbReference type="ChEBI" id="CHEBI:59776"/>
    </ligand>
</feature>
<feature type="binding site" evidence="1">
    <location>
        <position position="184"/>
    </location>
    <ligand>
        <name>D-glyceraldehyde 3-phosphate</name>
        <dbReference type="ChEBI" id="CHEBI:59776"/>
    </ligand>
</feature>
<feature type="binding site" evidence="1">
    <location>
        <position position="199"/>
    </location>
    <ligand>
        <name>D-glyceraldehyde 3-phosphate</name>
        <dbReference type="ChEBI" id="CHEBI:59776"/>
    </ligand>
</feature>
<feature type="binding site" evidence="1">
    <location>
        <begin position="212"/>
        <end position="213"/>
    </location>
    <ligand>
        <name>D-glyceraldehyde 3-phosphate</name>
        <dbReference type="ChEBI" id="CHEBI:59776"/>
    </ligand>
</feature>
<feature type="binding site" evidence="1">
    <location>
        <position position="235"/>
    </location>
    <ligand>
        <name>D-glyceraldehyde 3-phosphate</name>
        <dbReference type="ChEBI" id="CHEBI:59776"/>
    </ligand>
</feature>
<feature type="binding site" evidence="1">
    <location>
        <position position="317"/>
    </location>
    <ligand>
        <name>NADP(+)</name>
        <dbReference type="ChEBI" id="CHEBI:58349"/>
    </ligand>
</feature>
<feature type="site" description="Activates thiol group during catalysis" evidence="5">
    <location>
        <position position="181"/>
    </location>
</feature>
<feature type="sequence conflict" description="In Ref. 1; AAA21996." evidence="6" ref="1">
    <original>K</original>
    <variation>N</variation>
    <location>
        <position position="47"/>
    </location>
</feature>
<feature type="sequence conflict" description="In Ref. 1; AAA21996." evidence="6" ref="1">
    <original>M</original>
    <variation>S</variation>
    <location>
        <position position="51"/>
    </location>
</feature>
<feature type="sequence conflict" description="In Ref. 1; AAA21996." evidence="6" ref="1">
    <original>KLKN</original>
    <variation>VKK</variation>
    <location>
        <begin position="54"/>
        <end position="57"/>
    </location>
</feature>
<feature type="sequence conflict" description="In Ref. 1; AAA21996." evidence="6" ref="1">
    <original>A</original>
    <variation>V</variation>
    <location>
        <position position="114"/>
    </location>
</feature>
<feature type="sequence conflict" description="In Ref. 1; AAA21996." evidence="6" ref="1">
    <original>A</original>
    <variation>R</variation>
    <location>
        <position position="217"/>
    </location>
</feature>
<name>G3P2_TRIV2</name>
<keyword id="KW-0113">Calvin cycle</keyword>
<keyword id="KW-0963">Cytoplasm</keyword>
<keyword id="KW-0521">NADP</keyword>
<keyword id="KW-0547">Nucleotide-binding</keyword>
<keyword id="KW-0560">Oxidoreductase</keyword>
<organism>
    <name type="scientific">Trichormus variabilis (strain ATCC 29413 / PCC 7937)</name>
    <name type="common">Anabaena variabilis</name>
    <dbReference type="NCBI Taxonomy" id="240292"/>
    <lineage>
        <taxon>Bacteria</taxon>
        <taxon>Bacillati</taxon>
        <taxon>Cyanobacteriota</taxon>
        <taxon>Cyanophyceae</taxon>
        <taxon>Nostocales</taxon>
        <taxon>Nostocaceae</taxon>
        <taxon>Trichormus</taxon>
    </lineage>
</organism>